<reference key="1">
    <citation type="journal article" date="2007" name="Nat. Biotechnol.">
        <title>Genome sequencing and analysis of the versatile cell factory Aspergillus niger CBS 513.88.</title>
        <authorList>
            <person name="Pel H.J."/>
            <person name="de Winde J.H."/>
            <person name="Archer D.B."/>
            <person name="Dyer P.S."/>
            <person name="Hofmann G."/>
            <person name="Schaap P.J."/>
            <person name="Turner G."/>
            <person name="de Vries R.P."/>
            <person name="Albang R."/>
            <person name="Albermann K."/>
            <person name="Andersen M.R."/>
            <person name="Bendtsen J.D."/>
            <person name="Benen J.A.E."/>
            <person name="van den Berg M."/>
            <person name="Breestraat S."/>
            <person name="Caddick M.X."/>
            <person name="Contreras R."/>
            <person name="Cornell M."/>
            <person name="Coutinho P.M."/>
            <person name="Danchin E.G.J."/>
            <person name="Debets A.J.M."/>
            <person name="Dekker P."/>
            <person name="van Dijck P.W.M."/>
            <person name="van Dijk A."/>
            <person name="Dijkhuizen L."/>
            <person name="Driessen A.J.M."/>
            <person name="d'Enfert C."/>
            <person name="Geysens S."/>
            <person name="Goosen C."/>
            <person name="Groot G.S.P."/>
            <person name="de Groot P.W.J."/>
            <person name="Guillemette T."/>
            <person name="Henrissat B."/>
            <person name="Herweijer M."/>
            <person name="van den Hombergh J.P.T.W."/>
            <person name="van den Hondel C.A.M.J.J."/>
            <person name="van der Heijden R.T.J.M."/>
            <person name="van der Kaaij R.M."/>
            <person name="Klis F.M."/>
            <person name="Kools H.J."/>
            <person name="Kubicek C.P."/>
            <person name="van Kuyk P.A."/>
            <person name="Lauber J."/>
            <person name="Lu X."/>
            <person name="van der Maarel M.J.E.C."/>
            <person name="Meulenberg R."/>
            <person name="Menke H."/>
            <person name="Mortimer M.A."/>
            <person name="Nielsen J."/>
            <person name="Oliver S.G."/>
            <person name="Olsthoorn M."/>
            <person name="Pal K."/>
            <person name="van Peij N.N.M.E."/>
            <person name="Ram A.F.J."/>
            <person name="Rinas U."/>
            <person name="Roubos J.A."/>
            <person name="Sagt C.M.J."/>
            <person name="Schmoll M."/>
            <person name="Sun J."/>
            <person name="Ussery D."/>
            <person name="Varga J."/>
            <person name="Vervecken W."/>
            <person name="van de Vondervoort P.J.J."/>
            <person name="Wedler H."/>
            <person name="Woesten H.A.B."/>
            <person name="Zeng A.-P."/>
            <person name="van Ooyen A.J.J."/>
            <person name="Visser J."/>
            <person name="Stam H."/>
        </authorList>
    </citation>
    <scope>NUCLEOTIDE SEQUENCE [LARGE SCALE GENOMIC DNA]</scope>
    <source>
        <strain>ATCC MYA-4892 / CBS 513.88 / FGSC A1513</strain>
    </source>
</reference>
<evidence type="ECO:0000255" key="1">
    <source>
        <dbReference type="HAMAP-Rule" id="MF_03018"/>
    </source>
</evidence>
<evidence type="ECO:0000305" key="2"/>
<accession>A2QMH1</accession>
<proteinExistence type="inferred from homology"/>
<keyword id="KW-0274">FAD</keyword>
<keyword id="KW-0285">Flavoprotein</keyword>
<keyword id="KW-0472">Membrane</keyword>
<keyword id="KW-0496">Mitochondrion</keyword>
<keyword id="KW-1000">Mitochondrion outer membrane</keyword>
<keyword id="KW-0503">Monooxygenase</keyword>
<keyword id="KW-0521">NADP</keyword>
<keyword id="KW-0560">Oxidoreductase</keyword>
<keyword id="KW-0662">Pyridine nucleotide biosynthesis</keyword>
<keyword id="KW-1185">Reference proteome</keyword>
<gene>
    <name type="primary">bna4-2</name>
    <name type="ORF">An07g02080</name>
</gene>
<organism>
    <name type="scientific">Aspergillus niger (strain ATCC MYA-4892 / CBS 513.88 / FGSC A1513)</name>
    <dbReference type="NCBI Taxonomy" id="425011"/>
    <lineage>
        <taxon>Eukaryota</taxon>
        <taxon>Fungi</taxon>
        <taxon>Dikarya</taxon>
        <taxon>Ascomycota</taxon>
        <taxon>Pezizomycotina</taxon>
        <taxon>Eurotiomycetes</taxon>
        <taxon>Eurotiomycetidae</taxon>
        <taxon>Eurotiales</taxon>
        <taxon>Aspergillaceae</taxon>
        <taxon>Aspergillus</taxon>
        <taxon>Aspergillus subgen. Circumdati</taxon>
    </lineage>
</organism>
<name>KMO2_ASPNC</name>
<dbReference type="EC" id="1.14.13.9" evidence="1"/>
<dbReference type="EMBL" id="AM270121">
    <property type="protein sequence ID" value="CAK48109.1"/>
    <property type="status" value="ALT_SEQ"/>
    <property type="molecule type" value="Genomic_DNA"/>
</dbReference>
<dbReference type="RefSeq" id="XP_001391294.2">
    <property type="nucleotide sequence ID" value="XM_001391257.2"/>
</dbReference>
<dbReference type="SMR" id="A2QMH1"/>
<dbReference type="EnsemblFungi" id="CAK48109">
    <property type="protein sequence ID" value="CAK48109"/>
    <property type="gene ID" value="An07g02080"/>
</dbReference>
<dbReference type="GeneID" id="4981475"/>
<dbReference type="KEGG" id="ang:An07g02080"/>
<dbReference type="UniPathway" id="UPA00253">
    <property type="reaction ID" value="UER00328"/>
</dbReference>
<dbReference type="Proteomes" id="UP000006706">
    <property type="component" value="Chromosome 4L"/>
</dbReference>
<dbReference type="GO" id="GO:0005741">
    <property type="term" value="C:mitochondrial outer membrane"/>
    <property type="evidence" value="ECO:0007669"/>
    <property type="project" value="UniProtKB-SubCell"/>
</dbReference>
<dbReference type="GO" id="GO:0071949">
    <property type="term" value="F:FAD binding"/>
    <property type="evidence" value="ECO:0007669"/>
    <property type="project" value="InterPro"/>
</dbReference>
<dbReference type="GO" id="GO:0004502">
    <property type="term" value="F:kynurenine 3-monooxygenase activity"/>
    <property type="evidence" value="ECO:0007669"/>
    <property type="project" value="UniProtKB-UniRule"/>
</dbReference>
<dbReference type="GO" id="GO:0034354">
    <property type="term" value="P:'de novo' NAD biosynthetic process from L-tryptophan"/>
    <property type="evidence" value="ECO:0007669"/>
    <property type="project" value="UniProtKB-UniRule"/>
</dbReference>
<dbReference type="GO" id="GO:0043420">
    <property type="term" value="P:anthranilate metabolic process"/>
    <property type="evidence" value="ECO:0007669"/>
    <property type="project" value="UniProtKB-UniRule"/>
</dbReference>
<dbReference type="GO" id="GO:0070189">
    <property type="term" value="P:kynurenine metabolic process"/>
    <property type="evidence" value="ECO:0007669"/>
    <property type="project" value="TreeGrafter"/>
</dbReference>
<dbReference type="GO" id="GO:0006569">
    <property type="term" value="P:L-tryptophan catabolic process"/>
    <property type="evidence" value="ECO:0007669"/>
    <property type="project" value="UniProtKB-UniRule"/>
</dbReference>
<dbReference type="GO" id="GO:0019805">
    <property type="term" value="P:quinolinate biosynthetic process"/>
    <property type="evidence" value="ECO:0007669"/>
    <property type="project" value="UniProtKB-UniRule"/>
</dbReference>
<dbReference type="FunFam" id="3.50.50.60:FF:000129">
    <property type="entry name" value="Kynurenine 3-monooxygenase"/>
    <property type="match status" value="1"/>
</dbReference>
<dbReference type="Gene3D" id="3.50.50.60">
    <property type="entry name" value="FAD/NAD(P)-binding domain"/>
    <property type="match status" value="1"/>
</dbReference>
<dbReference type="HAMAP" id="MF_01971">
    <property type="entry name" value="Kynurenine_monooxygenase"/>
    <property type="match status" value="1"/>
</dbReference>
<dbReference type="InterPro" id="IPR002938">
    <property type="entry name" value="FAD-bd"/>
</dbReference>
<dbReference type="InterPro" id="IPR036188">
    <property type="entry name" value="FAD/NAD-bd_sf"/>
</dbReference>
<dbReference type="InterPro" id="IPR027545">
    <property type="entry name" value="Kynurenine_monooxygenase"/>
</dbReference>
<dbReference type="PANTHER" id="PTHR46028">
    <property type="entry name" value="KYNURENINE 3-MONOOXYGENASE"/>
    <property type="match status" value="1"/>
</dbReference>
<dbReference type="PANTHER" id="PTHR46028:SF2">
    <property type="entry name" value="KYNURENINE 3-MONOOXYGENASE"/>
    <property type="match status" value="1"/>
</dbReference>
<dbReference type="Pfam" id="PF01494">
    <property type="entry name" value="FAD_binding_3"/>
    <property type="match status" value="2"/>
</dbReference>
<dbReference type="PRINTS" id="PR00420">
    <property type="entry name" value="RNGMNOXGNASE"/>
</dbReference>
<dbReference type="SUPFAM" id="SSF51905">
    <property type="entry name" value="FAD/NAD(P)-binding domain"/>
    <property type="match status" value="1"/>
</dbReference>
<feature type="chain" id="PRO_0000361920" description="Kynurenine 3-monooxygenase 2">
    <location>
        <begin position="1"/>
        <end position="488"/>
    </location>
</feature>
<protein>
    <recommendedName>
        <fullName evidence="1">Kynurenine 3-monooxygenase 2</fullName>
        <ecNumber evidence="1">1.14.13.9</ecNumber>
    </recommendedName>
    <alternativeName>
        <fullName evidence="1">Biosynthesis of nicotinic acid protein 4-2</fullName>
    </alternativeName>
    <alternativeName>
        <fullName evidence="1">Kynurenine 3-hydroxylase 2</fullName>
    </alternativeName>
</protein>
<sequence length="488" mass="54798">MTADGKIVIVGGGPVGSLAALYASHYHDNVEVYELRDERQNPAGASPLLQKSINFTLSERGIRALEKSGRTDLLRAIMRTAIPMHGRMVHGRMVHGRSVSGKLQETFHQYDVHGNSLYSLDRKALNIALRQELDATPNVKMFFHHKLIRADMNTRKVWFEQREDPSTSTSPSTSSTPKEVPFDFLIGADGAHSTTRQQIMRYTPLDYQQQYADTVWCELRIPPTEKTNSFRLPPNYLHIWPGGEYMFCAFPCPDQSFNCILFAPASRLDALKSSPPATLFDFFDTHFPGVCPDLISQSSLSQQFYQSPHLPLIGIKCSPHHLGSAAVIIGDAAHAMFPFYGQGLNAGMEDVRILFDLLDEHRVFGHGKSLDKDHARAAALTEYSNQRVRDAHAIHDLSRRNYLELRGGVNSPVYKARKFVEEALQRYVPLLGWRTLYSRVSFSDQRYSEVVVKNELQGWVLLLMSGLGVLLHVLVFGALGGAFLGLKR</sequence>
<comment type="function">
    <text evidence="1">Catalyzes the hydroxylation of L-kynurenine (L-Kyn) to form 3-hydroxy-L-kynurenine (L-3OHKyn). Required for synthesis of quinolinic acid.</text>
</comment>
<comment type="catalytic activity">
    <reaction evidence="1">
        <text>L-kynurenine + NADPH + O2 + H(+) = 3-hydroxy-L-kynurenine + NADP(+) + H2O</text>
        <dbReference type="Rhea" id="RHEA:20545"/>
        <dbReference type="ChEBI" id="CHEBI:15377"/>
        <dbReference type="ChEBI" id="CHEBI:15378"/>
        <dbReference type="ChEBI" id="CHEBI:15379"/>
        <dbReference type="ChEBI" id="CHEBI:57783"/>
        <dbReference type="ChEBI" id="CHEBI:57959"/>
        <dbReference type="ChEBI" id="CHEBI:58125"/>
        <dbReference type="ChEBI" id="CHEBI:58349"/>
        <dbReference type="EC" id="1.14.13.9"/>
    </reaction>
</comment>
<comment type="cofactor">
    <cofactor evidence="1">
        <name>FAD</name>
        <dbReference type="ChEBI" id="CHEBI:57692"/>
    </cofactor>
</comment>
<comment type="pathway">
    <text evidence="1">Cofactor biosynthesis; NAD(+) biosynthesis; quinolinate from L-kynurenine: step 1/3.</text>
</comment>
<comment type="subcellular location">
    <subcellularLocation>
        <location evidence="1">Mitochondrion outer membrane</location>
    </subcellularLocation>
</comment>
<comment type="similarity">
    <text evidence="1">Belongs to the aromatic-ring hydroxylase family. KMO subfamily.</text>
</comment>
<comment type="sequence caution" evidence="2">
    <conflict type="erroneous gene model prediction">
        <sequence resource="EMBL-CDS" id="CAK48109"/>
    </conflict>
</comment>